<gene>
    <name evidence="1" type="primary">glyQ</name>
    <name type="ordered locus">SPCG_1464</name>
</gene>
<reference key="1">
    <citation type="journal article" date="2009" name="BMC Genomics">
        <title>Genome evolution driven by host adaptations results in a more virulent and antimicrobial-resistant Streptococcus pneumoniae serotype 14.</title>
        <authorList>
            <person name="Ding F."/>
            <person name="Tang P."/>
            <person name="Hsu M.-H."/>
            <person name="Cui P."/>
            <person name="Hu S."/>
            <person name="Yu J."/>
            <person name="Chiu C.-H."/>
        </authorList>
    </citation>
    <scope>NUCLEOTIDE SEQUENCE [LARGE SCALE GENOMIC DNA]</scope>
    <source>
        <strain>CGSP14</strain>
    </source>
</reference>
<protein>
    <recommendedName>
        <fullName evidence="1">Glycine--tRNA ligase alpha subunit</fullName>
        <ecNumber evidence="1">6.1.1.14</ecNumber>
    </recommendedName>
    <alternativeName>
        <fullName evidence="1">Glycyl-tRNA synthetase alpha subunit</fullName>
        <shortName evidence="1">GlyRS</shortName>
    </alternativeName>
</protein>
<comment type="catalytic activity">
    <reaction evidence="1">
        <text>tRNA(Gly) + glycine + ATP = glycyl-tRNA(Gly) + AMP + diphosphate</text>
        <dbReference type="Rhea" id="RHEA:16013"/>
        <dbReference type="Rhea" id="RHEA-COMP:9664"/>
        <dbReference type="Rhea" id="RHEA-COMP:9683"/>
        <dbReference type="ChEBI" id="CHEBI:30616"/>
        <dbReference type="ChEBI" id="CHEBI:33019"/>
        <dbReference type="ChEBI" id="CHEBI:57305"/>
        <dbReference type="ChEBI" id="CHEBI:78442"/>
        <dbReference type="ChEBI" id="CHEBI:78522"/>
        <dbReference type="ChEBI" id="CHEBI:456215"/>
        <dbReference type="EC" id="6.1.1.14"/>
    </reaction>
</comment>
<comment type="subunit">
    <text evidence="1">Tetramer of two alpha and two beta subunits.</text>
</comment>
<comment type="subcellular location">
    <subcellularLocation>
        <location evidence="1">Cytoplasm</location>
    </subcellularLocation>
</comment>
<comment type="similarity">
    <text evidence="1">Belongs to the class-II aminoacyl-tRNA synthetase family.</text>
</comment>
<proteinExistence type="inferred from homology"/>
<dbReference type="EC" id="6.1.1.14" evidence="1"/>
<dbReference type="EMBL" id="CP001033">
    <property type="protein sequence ID" value="ACB90716.1"/>
    <property type="molecule type" value="Genomic_DNA"/>
</dbReference>
<dbReference type="RefSeq" id="WP_000038762.1">
    <property type="nucleotide sequence ID" value="NC_010582.1"/>
</dbReference>
<dbReference type="SMR" id="B2IQU2"/>
<dbReference type="KEGG" id="spw:SPCG_1464"/>
<dbReference type="HOGENOM" id="CLU_057066_1_0_9"/>
<dbReference type="GO" id="GO:0005829">
    <property type="term" value="C:cytosol"/>
    <property type="evidence" value="ECO:0007669"/>
    <property type="project" value="TreeGrafter"/>
</dbReference>
<dbReference type="GO" id="GO:0005524">
    <property type="term" value="F:ATP binding"/>
    <property type="evidence" value="ECO:0007669"/>
    <property type="project" value="UniProtKB-UniRule"/>
</dbReference>
<dbReference type="GO" id="GO:0140096">
    <property type="term" value="F:catalytic activity, acting on a protein"/>
    <property type="evidence" value="ECO:0007669"/>
    <property type="project" value="UniProtKB-ARBA"/>
</dbReference>
<dbReference type="GO" id="GO:0004820">
    <property type="term" value="F:glycine-tRNA ligase activity"/>
    <property type="evidence" value="ECO:0007669"/>
    <property type="project" value="UniProtKB-UniRule"/>
</dbReference>
<dbReference type="GO" id="GO:0016740">
    <property type="term" value="F:transferase activity"/>
    <property type="evidence" value="ECO:0007669"/>
    <property type="project" value="UniProtKB-ARBA"/>
</dbReference>
<dbReference type="GO" id="GO:0006426">
    <property type="term" value="P:glycyl-tRNA aminoacylation"/>
    <property type="evidence" value="ECO:0007669"/>
    <property type="project" value="UniProtKB-UniRule"/>
</dbReference>
<dbReference type="CDD" id="cd00733">
    <property type="entry name" value="GlyRS_alpha_core"/>
    <property type="match status" value="1"/>
</dbReference>
<dbReference type="FunFam" id="3.30.930.10:FF:000006">
    <property type="entry name" value="Glycine--tRNA ligase alpha subunit"/>
    <property type="match status" value="1"/>
</dbReference>
<dbReference type="Gene3D" id="3.30.930.10">
    <property type="entry name" value="Bira Bifunctional Protein, Domain 2"/>
    <property type="match status" value="1"/>
</dbReference>
<dbReference type="Gene3D" id="1.20.58.180">
    <property type="entry name" value="Class II aaRS and biotin synthetases, domain 2"/>
    <property type="match status" value="1"/>
</dbReference>
<dbReference type="HAMAP" id="MF_00254">
    <property type="entry name" value="Gly_tRNA_synth_alpha"/>
    <property type="match status" value="1"/>
</dbReference>
<dbReference type="InterPro" id="IPR045864">
    <property type="entry name" value="aa-tRNA-synth_II/BPL/LPL"/>
</dbReference>
<dbReference type="InterPro" id="IPR006194">
    <property type="entry name" value="Gly-tRNA-synth_heterodimer"/>
</dbReference>
<dbReference type="InterPro" id="IPR002310">
    <property type="entry name" value="Gly-tRNA_ligase_asu"/>
</dbReference>
<dbReference type="NCBIfam" id="TIGR00388">
    <property type="entry name" value="glyQ"/>
    <property type="match status" value="1"/>
</dbReference>
<dbReference type="NCBIfam" id="NF006827">
    <property type="entry name" value="PRK09348.1"/>
    <property type="match status" value="1"/>
</dbReference>
<dbReference type="PANTHER" id="PTHR30075:SF2">
    <property type="entry name" value="GLYCINE--TRNA LIGASE, CHLOROPLASTIC_MITOCHONDRIAL 2"/>
    <property type="match status" value="1"/>
</dbReference>
<dbReference type="PANTHER" id="PTHR30075">
    <property type="entry name" value="GLYCYL-TRNA SYNTHETASE"/>
    <property type="match status" value="1"/>
</dbReference>
<dbReference type="Pfam" id="PF02091">
    <property type="entry name" value="tRNA-synt_2e"/>
    <property type="match status" value="1"/>
</dbReference>
<dbReference type="PRINTS" id="PR01044">
    <property type="entry name" value="TRNASYNTHGA"/>
</dbReference>
<dbReference type="SUPFAM" id="SSF55681">
    <property type="entry name" value="Class II aaRS and biotin synthetases"/>
    <property type="match status" value="1"/>
</dbReference>
<dbReference type="PROSITE" id="PS50861">
    <property type="entry name" value="AA_TRNA_LIGASE_II_GLYAB"/>
    <property type="match status" value="1"/>
</dbReference>
<keyword id="KW-0030">Aminoacyl-tRNA synthetase</keyword>
<keyword id="KW-0067">ATP-binding</keyword>
<keyword id="KW-0963">Cytoplasm</keyword>
<keyword id="KW-0436">Ligase</keyword>
<keyword id="KW-0547">Nucleotide-binding</keyword>
<keyword id="KW-0648">Protein biosynthesis</keyword>
<accession>B2IQU2</accession>
<name>SYGA_STRPS</name>
<evidence type="ECO:0000255" key="1">
    <source>
        <dbReference type="HAMAP-Rule" id="MF_00254"/>
    </source>
</evidence>
<organism>
    <name type="scientific">Streptococcus pneumoniae (strain CGSP14)</name>
    <dbReference type="NCBI Taxonomy" id="516950"/>
    <lineage>
        <taxon>Bacteria</taxon>
        <taxon>Bacillati</taxon>
        <taxon>Bacillota</taxon>
        <taxon>Bacilli</taxon>
        <taxon>Lactobacillales</taxon>
        <taxon>Streptococcaceae</taxon>
        <taxon>Streptococcus</taxon>
    </lineage>
</organism>
<sequence length="305" mass="34934">MSKKLTFQEIILTLQRFWNDQGCMLMQAYDNEKGAGTMSPYTFLRAIGPEPWNAAYVEPSRRPADGRYGENPNRLYQHHQFQVVMKPSPSNIQELYLESLEKLGINPLEHDIRFVEDNWENPSTGSAGLGWEVWLDGMEITQFTYFQQVGGLATGPVTAEVTYGLERLASYIQEVDSVYDIEWADGVKYGEIFIQPEYEHSKYSFEISDQEMLLENFDKFEKEAGRALEEGLVHPAYDYVLKCSHTFNLLDARGAVSVTERAGYIARIRNLARVVAKTFVAERKRLGYPLLDEETRAKLLAEDAE</sequence>
<feature type="chain" id="PRO_1000101238" description="Glycine--tRNA ligase alpha subunit">
    <location>
        <begin position="1"/>
        <end position="305"/>
    </location>
</feature>